<protein>
    <recommendedName>
        <fullName evidence="11">Serine/threonine-protein kinase ROP17</fullName>
        <ecNumber evidence="4">2.7.11.1</ecNumber>
    </recommendedName>
    <alternativeName>
        <fullName evidence="13">Rhoptry protein 17</fullName>
    </alternativeName>
    <alternativeName>
        <fullName evidence="10">TgROP17</fullName>
    </alternativeName>
</protein>
<gene>
    <name evidence="13" type="primary">rop17</name>
</gene>
<accession>Q2PAY3</accession>
<evidence type="ECO:0000255" key="1"/>
<evidence type="ECO:0000255" key="2">
    <source>
        <dbReference type="PROSITE-ProRule" id="PRU00159"/>
    </source>
</evidence>
<evidence type="ECO:0000255" key="3">
    <source>
        <dbReference type="PROSITE-ProRule" id="PRU00498"/>
    </source>
</evidence>
<evidence type="ECO:0000269" key="4">
    <source>
    </source>
</evidence>
<evidence type="ECO:0000269" key="5">
    <source>
    </source>
</evidence>
<evidence type="ECO:0000269" key="6">
    <source>
    </source>
</evidence>
<evidence type="ECO:0000269" key="7">
    <source>
    </source>
</evidence>
<evidence type="ECO:0000269" key="8">
    <source>
    </source>
</evidence>
<evidence type="ECO:0000269" key="9">
    <source>
    </source>
</evidence>
<evidence type="ECO:0000303" key="10">
    <source>
    </source>
</evidence>
<evidence type="ECO:0000305" key="11"/>
<evidence type="ECO:0000305" key="12">
    <source>
    </source>
</evidence>
<evidence type="ECO:0000312" key="13">
    <source>
        <dbReference type="EMBL" id="CAJ27112.1"/>
    </source>
</evidence>
<proteinExistence type="evidence at protein level"/>
<organism evidence="13">
    <name type="scientific">Toxoplasma gondii</name>
    <dbReference type="NCBI Taxonomy" id="5811"/>
    <lineage>
        <taxon>Eukaryota</taxon>
        <taxon>Sar</taxon>
        <taxon>Alveolata</taxon>
        <taxon>Apicomplexa</taxon>
        <taxon>Conoidasida</taxon>
        <taxon>Coccidia</taxon>
        <taxon>Eucoccidiorida</taxon>
        <taxon>Eimeriorina</taxon>
        <taxon>Sarcocystidae</taxon>
        <taxon>Toxoplasma</taxon>
    </lineage>
</organism>
<reference evidence="13" key="1">
    <citation type="submission" date="2005-08" db="EMBL/GenBank/DDBJ databases">
        <title>The rop2 family of toxoplasma gondii rhoptry proteins: proteomic and genomic characterization.</title>
        <authorList>
            <person name="El Hajj H."/>
            <person name="Demey E."/>
            <person name="Poncet J."/>
            <person name="Lebrun M."/>
            <person name="Galeotti N."/>
            <person name="Fourmaux M.N."/>
            <person name="Vial H."/>
            <person name="Dubremetz J.F."/>
        </authorList>
    </citation>
    <scope>NUCLEOTIDE SEQUENCE [LARGE SCALE GENOMIC DNA]</scope>
    <source>
        <strain evidence="13">RH</strain>
    </source>
</reference>
<reference evidence="11" key="2">
    <citation type="journal article" date="2014" name="Cell Host Microbe">
        <title>The Toxoplasma pseudokinase ROP5 forms complexes with ROP18 and ROP17 kinases that synergize to control acute virulence in mice.</title>
        <authorList>
            <person name="Etheridge R.D."/>
            <person name="Alaganan A."/>
            <person name="Tang K."/>
            <person name="Lou H.J."/>
            <person name="Turk B.E."/>
            <person name="Sibley L.D."/>
        </authorList>
    </citation>
    <scope>IDENTIFICATION BY MASS SPECTROMETRY</scope>
    <scope>FUNCTION</scope>
    <scope>CATALYTIC ACTIVITY</scope>
    <scope>INTERACTION WITH ROP5</scope>
    <scope>SUBCELLULAR LOCATION</scope>
    <scope>DISRUPTION PHENOTYPE</scope>
</reference>
<reference evidence="11" key="3">
    <citation type="journal article" date="2016" name="Parasite">
        <title>DNA vaccination with a gene encoding Toxoplasma gondii Rhoptry Protein 17 induces partial protective immunity against lethal challenge in mice.</title>
        <authorList>
            <person name="Wang H.L."/>
            <person name="Wang Y.J."/>
            <person name="Pei Y.J."/>
            <person name="Bai J.Z."/>
            <person name="Yin L.T."/>
            <person name="Guo R."/>
            <person name="Yin G.R."/>
        </authorList>
    </citation>
    <scope>VACCINE CANDIDATE</scope>
</reference>
<reference evidence="11" key="4">
    <citation type="journal article" date="2019" name="MSphere">
        <title>Translocation of Dense Granule Effectors across the Parasitophorous Vacuole Membrane in Toxoplasma-Infected Cells Requires the Activity of ROP17, a Rhoptry Protein Kinase.</title>
        <authorList>
            <person name="Panas M.W."/>
            <person name="Ferrel A."/>
            <person name="Naor A."/>
            <person name="Tenborg E."/>
            <person name="Lorenzi H.A."/>
            <person name="Boothroyd J.C."/>
        </authorList>
    </citation>
    <scope>FUNCTION</scope>
    <scope>SUBCELLULAR LOCATION</scope>
    <scope>MUTAGENESIS OF LYS-312; ASP-436 AND ASP-454</scope>
</reference>
<reference evidence="11" key="5">
    <citation type="journal article" date="2019" name="Nat. Microbiol.">
        <title>The secreted kinase ROP17 promotes Toxoplasma gondii dissemination by hijacking monocyte tissue migration.</title>
        <authorList>
            <person name="Drewry L.L."/>
            <person name="Jones N.G."/>
            <person name="Wang Q."/>
            <person name="Onken M.D."/>
            <person name="Miller M.J."/>
            <person name="Sibley L.D."/>
        </authorList>
    </citation>
    <scope>FUNCTION</scope>
    <scope>DISRUPTION PHENOTYPE</scope>
</reference>
<reference evidence="11" key="6">
    <citation type="journal article" date="2019" name="Parasitol. Res.">
        <title>Toxoplasma gondii ROP17 inhibits the innate immune response of HEK293T cells to promote its survival.</title>
        <authorList>
            <person name="Li J.X."/>
            <person name="He J.J."/>
            <person name="Elsheikha H.M."/>
            <person name="Chen D."/>
            <person name="Zhai B.T."/>
            <person name="Zhu X.Q."/>
            <person name="Yan H.K."/>
        </authorList>
    </citation>
    <scope>FUNCTION</scope>
</reference>
<reference evidence="11" key="7">
    <citation type="journal article" date="2021" name="Folia Parasitol.">
        <title>Toxoplasma gondii ROP17 promotes autophagy via the Bcl-2-Beclin 1 pathway.</title>
        <authorList>
            <person name="Guo M."/>
            <person name="Sun J."/>
            <person name="Wang W.T."/>
            <person name="Liu H.Y."/>
            <person name="Liu Y.H."/>
            <person name="Qin K.R."/>
            <person name="Hu J.R."/>
            <person name="Li X.Y."/>
            <person name="Liu H.L."/>
            <person name="Wang W."/>
            <person name="Chen Z.Y."/>
            <person name="Wang C.F."/>
            <person name="Wang H.L."/>
        </authorList>
    </citation>
    <scope>FUNCTION</scope>
    <scope>INTERACTION WITH HUMAN BCL2</scope>
</reference>
<sequence>MELVLCFVIITISGVIRESSALLLRSPTSNDVFGELVASAERAQPLATRLTKRISRLNFNDREDDFWEDHGDASWNNSYTLVNGRTTLGSENRRRPASHSLIERPYYRDGRLSPVLGVQERRGRSVHSYHEEPVSFFDQRAFDEYTFRRRSQLHRQRARAGLRSRIKQNVRRLWTSARGAVRGWGRRVRRKIGDLFVGHLMPQLRRLRFWDQGLPPVVPPLIGNEPGQASVALVAERMEARLREKTLTEKNPTEAQQAVGTYLINSAENTWFISIPGGRYILLKKRGFLGGGGFGLVYHVEHPTTGQPFALKIFVQRVMNNEVGDKISDLIEDEFGVMKYFPPEWTPARMYSELRFMVPLLKLRVLGKPEFQDARNHLRIFSVCALFPKAQGDLEEAAALLADMDRTNAYNMRMSSTIQMVKLLARFHAFGLVHGDVKLQNFLVDKSGLLLLSDFTQILRTNERRYPPVVTVLYMSPEIATCLITRLRNAIPYTAEIDSWMLGISLYRLWCGDFPFGITLDATALQVAGIVIRSSASSLDFASCHDIPEQFREMIVGFLRKTPGVRLSPQQALEQFSLLNWKGPSPASDTASESEPVSTEEAALLQKE</sequence>
<name>ROP17_TOXGO</name>
<keyword id="KW-0067">ATP-binding</keyword>
<keyword id="KW-0968">Cytoplasmic vesicle</keyword>
<keyword id="KW-0325">Glycoprotein</keyword>
<keyword id="KW-0418">Kinase</keyword>
<keyword id="KW-0472">Membrane</keyword>
<keyword id="KW-0547">Nucleotide-binding</keyword>
<keyword id="KW-0964">Secreted</keyword>
<keyword id="KW-0723">Serine/threonine-protein kinase</keyword>
<keyword id="KW-0732">Signal</keyword>
<keyword id="KW-0808">Transferase</keyword>
<keyword id="KW-0843">Virulence</keyword>
<comment type="function">
    <text evidence="4 6 7 8 9">Protein kinase (PubMed:24832449). Virulence factor (PubMed:24832449). Promotes migration of Toxoplasma-infected macrophages through collagen matrix, facilitating parasite transport through tissues and systemic dissemination (PubMed:31332383). Plays a role in the translocation of dense granule effectors, such as GRA16 and GRA24, across the parasitophorous vacuole membrane in Toxoplasma-infected host cells (PubMed:31366709). Phosphorylates mouse IRGB6 (TGTP1/TGTP2), an immunity-related GTPase (IRG) that protects mice from infection by certain intracellular pathogens; the phosphorylation leads to the disassembly of IRGB6 polymers into monomers and dimers (PubMed:24832449). May modulate gene expression in human cells (PubMed:30675671). Promotes autophagy in human cells via modulation of the BCL2-BECN1 pathway (PubMed:34180401).</text>
</comment>
<comment type="catalytic activity">
    <reaction evidence="4">
        <text>L-threonyl-[protein] + ATP = O-phospho-L-threonyl-[protein] + ADP + H(+)</text>
        <dbReference type="Rhea" id="RHEA:46608"/>
        <dbReference type="Rhea" id="RHEA-COMP:11060"/>
        <dbReference type="Rhea" id="RHEA-COMP:11605"/>
        <dbReference type="ChEBI" id="CHEBI:15378"/>
        <dbReference type="ChEBI" id="CHEBI:30013"/>
        <dbReference type="ChEBI" id="CHEBI:30616"/>
        <dbReference type="ChEBI" id="CHEBI:61977"/>
        <dbReference type="ChEBI" id="CHEBI:456216"/>
        <dbReference type="EC" id="2.7.11.1"/>
    </reaction>
</comment>
<comment type="catalytic activity">
    <reaction evidence="12">
        <text>L-seryl-[protein] + ATP = O-phospho-L-seryl-[protein] + ADP + H(+)</text>
        <dbReference type="Rhea" id="RHEA:17989"/>
        <dbReference type="Rhea" id="RHEA-COMP:9863"/>
        <dbReference type="Rhea" id="RHEA-COMP:11604"/>
        <dbReference type="ChEBI" id="CHEBI:15378"/>
        <dbReference type="ChEBI" id="CHEBI:29999"/>
        <dbReference type="ChEBI" id="CHEBI:30616"/>
        <dbReference type="ChEBI" id="CHEBI:83421"/>
        <dbReference type="ChEBI" id="CHEBI:456216"/>
        <dbReference type="EC" id="2.7.11.1"/>
    </reaction>
</comment>
<comment type="subunit">
    <text evidence="4 9">Interacts with ROP5; interaction with ROP5 does not affect kinase activity (PubMed:24832449). Interacts with human BCL2; the interaction probably promotes BCL2 phosphorylation and degradation (PubMed:34180401).</text>
</comment>
<comment type="subcellular location">
    <subcellularLocation>
        <location evidence="4">Secreted</location>
    </subcellularLocation>
    <subcellularLocation>
        <location evidence="8">Cytoplasmic vesicle</location>
        <location evidence="8">Secretory vesicle</location>
        <location evidence="8">Rhoptry</location>
    </subcellularLocation>
    <subcellularLocation>
        <location evidence="4 8">Parasitophorous vacuole membrane</location>
    </subcellularLocation>
</comment>
<comment type="disruption phenotype">
    <text evidence="4 7">Gene knockout results in reduced virulence in mice due to greater immunological control in the host (PubMed:24832449). Significantly reduced virulence in double knockout with ROP18 (PubMed:24832449). Modest increase in the loading of host immunity-related GTPases (IRGs) following infection (PubMed:24832449). Reduced migration of Toxoplasma-infected monocytes and macrophages through the collagen matrix (PubMed:31332383). Reduced dissemination of parasites in mice (PubMed:31332383).</text>
</comment>
<comment type="miscellaneous">
    <text evidence="5">Immunization with ROP17-based DNA vaccines triggers both humoral and cellular but Th1-dominated immune responses in mice; induces effective protection against acute infection with Toxoplasma gondii.</text>
</comment>
<comment type="similarity">
    <text evidence="2">Belongs to the protein kinase superfamily. Ser/Thr protein kinase family.</text>
</comment>
<dbReference type="EC" id="2.7.11.1" evidence="4"/>
<dbReference type="EMBL" id="AM075203">
    <property type="protein sequence ID" value="CAJ27112.1"/>
    <property type="molecule type" value="Genomic_DNA"/>
</dbReference>
<dbReference type="VEuPathDB" id="ToxoDB:TGARI_258580"/>
<dbReference type="VEuPathDB" id="ToxoDB:TGCAST_258580"/>
<dbReference type="VEuPathDB" id="ToxoDB:TGCOUG_258580"/>
<dbReference type="VEuPathDB" id="ToxoDB:TGDOM2_258580"/>
<dbReference type="VEuPathDB" id="ToxoDB:TGFOU_258580"/>
<dbReference type="VEuPathDB" id="ToxoDB:TGGT1_258580"/>
<dbReference type="VEuPathDB" id="ToxoDB:TGMAS_258580"/>
<dbReference type="VEuPathDB" id="ToxoDB:TGME49_258580"/>
<dbReference type="VEuPathDB" id="ToxoDB:TGP89_258580"/>
<dbReference type="VEuPathDB" id="ToxoDB:TGPRC2_258580"/>
<dbReference type="VEuPathDB" id="ToxoDB:TGRH88_071480"/>
<dbReference type="VEuPathDB" id="ToxoDB:TGRUB_258580"/>
<dbReference type="VEuPathDB" id="ToxoDB:TGVAND_258580"/>
<dbReference type="VEuPathDB" id="ToxoDB:TGVEG_258580"/>
<dbReference type="GO" id="GO:0005524">
    <property type="term" value="F:ATP binding"/>
    <property type="evidence" value="ECO:0007669"/>
    <property type="project" value="UniProtKB-UniRule"/>
</dbReference>
<dbReference type="GO" id="GO:0004674">
    <property type="term" value="F:protein serine/threonine kinase activity"/>
    <property type="evidence" value="ECO:0007669"/>
    <property type="project" value="UniProtKB-KW"/>
</dbReference>
<dbReference type="Gene3D" id="3.30.200.20">
    <property type="entry name" value="Phosphorylase Kinase, domain 1"/>
    <property type="match status" value="1"/>
</dbReference>
<dbReference type="Gene3D" id="1.10.510.10">
    <property type="entry name" value="Transferase(Phosphotransferase) domain 1"/>
    <property type="match status" value="1"/>
</dbReference>
<dbReference type="InterPro" id="IPR050205">
    <property type="entry name" value="CDPK_Ser/Thr_kinases"/>
</dbReference>
<dbReference type="InterPro" id="IPR027916">
    <property type="entry name" value="Kinase-like_dom_Apicomplexa"/>
</dbReference>
<dbReference type="InterPro" id="IPR011009">
    <property type="entry name" value="Kinase-like_dom_sf"/>
</dbReference>
<dbReference type="InterPro" id="IPR000719">
    <property type="entry name" value="Prot_kinase_dom"/>
</dbReference>
<dbReference type="InterPro" id="IPR017441">
    <property type="entry name" value="Protein_kinase_ATP_BS"/>
</dbReference>
<dbReference type="InterPro" id="IPR008271">
    <property type="entry name" value="Ser/Thr_kinase_AS"/>
</dbReference>
<dbReference type="PANTHER" id="PTHR24349">
    <property type="entry name" value="SERINE/THREONINE-PROTEIN KINASE"/>
    <property type="match status" value="1"/>
</dbReference>
<dbReference type="Pfam" id="PF14531">
    <property type="entry name" value="Kinase-like"/>
    <property type="match status" value="1"/>
</dbReference>
<dbReference type="SMART" id="SM00220">
    <property type="entry name" value="S_TKc"/>
    <property type="match status" value="1"/>
</dbReference>
<dbReference type="SUPFAM" id="SSF56112">
    <property type="entry name" value="Protein kinase-like (PK-like)"/>
    <property type="match status" value="1"/>
</dbReference>
<dbReference type="PROSITE" id="PS00107">
    <property type="entry name" value="PROTEIN_KINASE_ATP"/>
    <property type="match status" value="1"/>
</dbReference>
<dbReference type="PROSITE" id="PS50011">
    <property type="entry name" value="PROTEIN_KINASE_DOM"/>
    <property type="match status" value="1"/>
</dbReference>
<dbReference type="PROSITE" id="PS00108">
    <property type="entry name" value="PROTEIN_KINASE_ST"/>
    <property type="match status" value="1"/>
</dbReference>
<feature type="signal peptide" evidence="1">
    <location>
        <begin position="1"/>
        <end position="21"/>
    </location>
</feature>
<feature type="chain" id="PRO_5004213307" description="Serine/threonine-protein kinase ROP17" evidence="1">
    <location>
        <begin position="22"/>
        <end position="608"/>
    </location>
</feature>
<feature type="domain" description="Protein kinase" evidence="2">
    <location>
        <begin position="283"/>
        <end position="579"/>
    </location>
</feature>
<feature type="active site" description="Proton acceptor" evidence="2">
    <location>
        <position position="436"/>
    </location>
</feature>
<feature type="binding site" evidence="2">
    <location>
        <begin position="289"/>
        <end position="297"/>
    </location>
    <ligand>
        <name>ATP</name>
        <dbReference type="ChEBI" id="CHEBI:30616"/>
    </ligand>
</feature>
<feature type="binding site" evidence="2">
    <location>
        <position position="312"/>
    </location>
    <ligand>
        <name>ATP</name>
        <dbReference type="ChEBI" id="CHEBI:30616"/>
    </ligand>
</feature>
<feature type="glycosylation site" description="N-linked (GlcNAc...) asparagine" evidence="3">
    <location>
        <position position="76"/>
    </location>
</feature>
<feature type="mutagenesis site" description="Reduces translocation of GRA24 across the parasitophorous vacuole membrane in Toxoplasma-infected host cells." evidence="8">
    <original>K</original>
    <variation>A</variation>
    <location>
        <position position="312"/>
    </location>
</feature>
<feature type="mutagenesis site" description="Reduces translocation of GRA24 across the parasitophorous vacuole membrane in Toxoplasma-infected host cells." evidence="8">
    <original>D</original>
    <variation>A</variation>
    <location>
        <position position="436"/>
    </location>
</feature>
<feature type="mutagenesis site" description="Predicted catalytic residue. Reduces translocation of GRA24 across the parasitophorous vacuole membrane in Toxoplasma-infected host cells." evidence="8">
    <original>D</original>
    <variation>A</variation>
    <location>
        <position position="454"/>
    </location>
</feature>